<keyword id="KW-0028">Amino-acid biosynthesis</keyword>
<keyword id="KW-0057">Aromatic amino acid biosynthesis</keyword>
<keyword id="KW-0521">NADP</keyword>
<keyword id="KW-0560">Oxidoreductase</keyword>
<keyword id="KW-1185">Reference proteome</keyword>
<organism>
    <name type="scientific">Buchnera aphidicola subsp. Acyrthosiphon pisum (strain APS)</name>
    <name type="common">Acyrthosiphon pisum symbiotic bacterium</name>
    <dbReference type="NCBI Taxonomy" id="107806"/>
    <lineage>
        <taxon>Bacteria</taxon>
        <taxon>Pseudomonadati</taxon>
        <taxon>Pseudomonadota</taxon>
        <taxon>Gammaproteobacteria</taxon>
        <taxon>Enterobacterales</taxon>
        <taxon>Erwiniaceae</taxon>
        <taxon>Buchnera</taxon>
    </lineage>
</organism>
<evidence type="ECO:0000255" key="1">
    <source>
        <dbReference type="HAMAP-Rule" id="MF_00222"/>
    </source>
</evidence>
<evidence type="ECO:0000305" key="2"/>
<sequence>MFKCKNFNYAVFGNPINHSKSPEIHSLFSKQTGISHFYKSCNVPLNSLYAVLQDFFKKDGRGANITAPFKQEAYFFCNKLTKRAEVAQSVNTLKKIDNCNILGDNTDGIGLLSDLIRLNFIKKNYSILIIGAGGAARGVLFPLLSYGCSICIFNRTVLNAEKLVLQFHKYGNINVFNTNSLHVKSFDLIINATSHFIQDKDNFIPFSCVSSKTCFYDMNYQTDNTFFFDWSRKTGSNFFSNGIGMLVFQAAHSFFLWHNVLPEIDYIIDLLNK</sequence>
<comment type="function">
    <text evidence="1">Involved in the biosynthesis of the chorismate, which leads to the biosynthesis of aromatic amino acids. Catalyzes the reversible NADPH linked reduction of 3-dehydroshikimate (DHSA) to yield shikimate (SA).</text>
</comment>
<comment type="catalytic activity">
    <reaction evidence="1">
        <text>shikimate + NADP(+) = 3-dehydroshikimate + NADPH + H(+)</text>
        <dbReference type="Rhea" id="RHEA:17737"/>
        <dbReference type="ChEBI" id="CHEBI:15378"/>
        <dbReference type="ChEBI" id="CHEBI:16630"/>
        <dbReference type="ChEBI" id="CHEBI:36208"/>
        <dbReference type="ChEBI" id="CHEBI:57783"/>
        <dbReference type="ChEBI" id="CHEBI:58349"/>
        <dbReference type="EC" id="1.1.1.25"/>
    </reaction>
</comment>
<comment type="pathway">
    <text evidence="1">Metabolic intermediate biosynthesis; chorismate biosynthesis; chorismate from D-erythrose 4-phosphate and phosphoenolpyruvate: step 4/7.</text>
</comment>
<comment type="subunit">
    <text evidence="1">Homodimer.</text>
</comment>
<comment type="similarity">
    <text evidence="1">Belongs to the shikimate dehydrogenase family.</text>
</comment>
<comment type="sequence caution" evidence="2">
    <conflict type="frameshift">
        <sequence resource="EMBL-CDS" id="AAA79125"/>
    </conflict>
</comment>
<name>AROE_BUCAI</name>
<gene>
    <name evidence="1" type="primary">aroE</name>
    <name type="ordered locus">BU493</name>
</gene>
<accession>Q44607</accession>
<feature type="chain" id="PRO_0000135995" description="Shikimate dehydrogenase (NADP(+))">
    <location>
        <begin position="1"/>
        <end position="273"/>
    </location>
</feature>
<feature type="active site" description="Proton acceptor" evidence="1">
    <location>
        <position position="70"/>
    </location>
</feature>
<feature type="binding site" evidence="1">
    <location>
        <begin position="19"/>
        <end position="21"/>
    </location>
    <ligand>
        <name>shikimate</name>
        <dbReference type="ChEBI" id="CHEBI:36208"/>
    </ligand>
</feature>
<feature type="binding site" evidence="1">
    <location>
        <position position="66"/>
    </location>
    <ligand>
        <name>shikimate</name>
        <dbReference type="ChEBI" id="CHEBI:36208"/>
    </ligand>
</feature>
<feature type="binding site" evidence="1">
    <location>
        <position position="91"/>
    </location>
    <ligand>
        <name>shikimate</name>
        <dbReference type="ChEBI" id="CHEBI:36208"/>
    </ligand>
</feature>
<feature type="binding site" evidence="1">
    <location>
        <position position="107"/>
    </location>
    <ligand>
        <name>shikimate</name>
        <dbReference type="ChEBI" id="CHEBI:36208"/>
    </ligand>
</feature>
<feature type="binding site" evidence="1">
    <location>
        <begin position="131"/>
        <end position="135"/>
    </location>
    <ligand>
        <name>NADP(+)</name>
        <dbReference type="ChEBI" id="CHEBI:58349"/>
    </ligand>
</feature>
<feature type="binding site" evidence="1">
    <location>
        <position position="218"/>
    </location>
    <ligand>
        <name>NADP(+)</name>
        <dbReference type="ChEBI" id="CHEBI:58349"/>
    </ligand>
</feature>
<feature type="binding site" evidence="1">
    <location>
        <position position="220"/>
    </location>
    <ligand>
        <name>shikimate</name>
        <dbReference type="ChEBI" id="CHEBI:36208"/>
    </ligand>
</feature>
<feature type="binding site" evidence="1">
    <location>
        <position position="242"/>
    </location>
    <ligand>
        <name>NADP(+)</name>
        <dbReference type="ChEBI" id="CHEBI:58349"/>
    </ligand>
</feature>
<reference key="1">
    <citation type="journal article" date="2000" name="Nature">
        <title>Genome sequence of the endocellular bacterial symbiont of aphids Buchnera sp. APS.</title>
        <authorList>
            <person name="Shigenobu S."/>
            <person name="Watanabe H."/>
            <person name="Hattori M."/>
            <person name="Sakaki Y."/>
            <person name="Ishikawa H."/>
        </authorList>
    </citation>
    <scope>NUCLEOTIDE SEQUENCE [LARGE SCALE GENOMIC DNA]</scope>
    <source>
        <strain>APS</strain>
    </source>
</reference>
<reference key="2">
    <citation type="journal article" date="1995" name="Gene">
        <title>Characterization of a putative 23S-5S rRNA operon of Buchnera aphidicola (endosymbiont of aphids) unlinked to the 16S rRNA-encoding gene.</title>
        <authorList>
            <person name="Rouhbakhsh D."/>
            <person name="Baumann P."/>
        </authorList>
    </citation>
    <scope>NUCLEOTIDE SEQUENCE [GENOMIC DNA] OF 253-273</scope>
</reference>
<proteinExistence type="inferred from homology"/>
<protein>
    <recommendedName>
        <fullName evidence="1">Shikimate dehydrogenase (NADP(+))</fullName>
        <shortName evidence="1">SDH</shortName>
        <ecNumber evidence="1">1.1.1.25</ecNumber>
    </recommendedName>
</protein>
<dbReference type="EC" id="1.1.1.25" evidence="1"/>
<dbReference type="EMBL" id="BA000003">
    <property type="protein sequence ID" value="BAB13186.1"/>
    <property type="molecule type" value="Genomic_DNA"/>
</dbReference>
<dbReference type="EMBL" id="U10496">
    <property type="protein sequence ID" value="AAA79125.1"/>
    <property type="status" value="ALT_FRAME"/>
    <property type="molecule type" value="Genomic_DNA"/>
</dbReference>
<dbReference type="PIR" id="I40062">
    <property type="entry name" value="I40062"/>
</dbReference>
<dbReference type="RefSeq" id="NP_240300.1">
    <property type="nucleotide sequence ID" value="NC_002528.1"/>
</dbReference>
<dbReference type="RefSeq" id="WP_009874444.1">
    <property type="nucleotide sequence ID" value="NZ_AP036055.1"/>
</dbReference>
<dbReference type="SMR" id="Q44607"/>
<dbReference type="STRING" id="563178.BUAP5A_486"/>
<dbReference type="EnsemblBacteria" id="BAB13186">
    <property type="protein sequence ID" value="BAB13186"/>
    <property type="gene ID" value="BAB13186"/>
</dbReference>
<dbReference type="KEGG" id="buc:BU493"/>
<dbReference type="PATRIC" id="fig|107806.10.peg.498"/>
<dbReference type="eggNOG" id="COG0169">
    <property type="taxonomic scope" value="Bacteria"/>
</dbReference>
<dbReference type="HOGENOM" id="CLU_044063_2_1_6"/>
<dbReference type="UniPathway" id="UPA00053">
    <property type="reaction ID" value="UER00087"/>
</dbReference>
<dbReference type="Proteomes" id="UP000001806">
    <property type="component" value="Chromosome"/>
</dbReference>
<dbReference type="GO" id="GO:0005829">
    <property type="term" value="C:cytosol"/>
    <property type="evidence" value="ECO:0007669"/>
    <property type="project" value="TreeGrafter"/>
</dbReference>
<dbReference type="GO" id="GO:0050661">
    <property type="term" value="F:NADP binding"/>
    <property type="evidence" value="ECO:0007669"/>
    <property type="project" value="InterPro"/>
</dbReference>
<dbReference type="GO" id="GO:0004764">
    <property type="term" value="F:shikimate 3-dehydrogenase (NADP+) activity"/>
    <property type="evidence" value="ECO:0007669"/>
    <property type="project" value="UniProtKB-UniRule"/>
</dbReference>
<dbReference type="GO" id="GO:0008652">
    <property type="term" value="P:amino acid biosynthetic process"/>
    <property type="evidence" value="ECO:0007669"/>
    <property type="project" value="UniProtKB-KW"/>
</dbReference>
<dbReference type="GO" id="GO:0009073">
    <property type="term" value="P:aromatic amino acid family biosynthetic process"/>
    <property type="evidence" value="ECO:0007669"/>
    <property type="project" value="UniProtKB-KW"/>
</dbReference>
<dbReference type="GO" id="GO:0009423">
    <property type="term" value="P:chorismate biosynthetic process"/>
    <property type="evidence" value="ECO:0007669"/>
    <property type="project" value="UniProtKB-UniRule"/>
</dbReference>
<dbReference type="GO" id="GO:0019632">
    <property type="term" value="P:shikimate metabolic process"/>
    <property type="evidence" value="ECO:0007669"/>
    <property type="project" value="InterPro"/>
</dbReference>
<dbReference type="CDD" id="cd01065">
    <property type="entry name" value="NAD_bind_Shikimate_DH"/>
    <property type="match status" value="1"/>
</dbReference>
<dbReference type="FunFam" id="3.40.50.10860:FF:000006">
    <property type="entry name" value="Shikimate dehydrogenase (NADP(+))"/>
    <property type="match status" value="1"/>
</dbReference>
<dbReference type="Gene3D" id="3.40.50.10860">
    <property type="entry name" value="Leucine Dehydrogenase, chain A, domain 1"/>
    <property type="match status" value="1"/>
</dbReference>
<dbReference type="Gene3D" id="3.40.50.720">
    <property type="entry name" value="NAD(P)-binding Rossmann-like Domain"/>
    <property type="match status" value="1"/>
</dbReference>
<dbReference type="HAMAP" id="MF_00222">
    <property type="entry name" value="Shikimate_DH_AroE"/>
    <property type="match status" value="1"/>
</dbReference>
<dbReference type="InterPro" id="IPR046346">
    <property type="entry name" value="Aminoacid_DH-like_N_sf"/>
</dbReference>
<dbReference type="InterPro" id="IPR036291">
    <property type="entry name" value="NAD(P)-bd_dom_sf"/>
</dbReference>
<dbReference type="InterPro" id="IPR041121">
    <property type="entry name" value="SDH_C"/>
</dbReference>
<dbReference type="InterPro" id="IPR011342">
    <property type="entry name" value="Shikimate_DH"/>
</dbReference>
<dbReference type="InterPro" id="IPR013708">
    <property type="entry name" value="Shikimate_DH-bd_N"/>
</dbReference>
<dbReference type="InterPro" id="IPR022893">
    <property type="entry name" value="Shikimate_DH_fam"/>
</dbReference>
<dbReference type="InterPro" id="IPR006151">
    <property type="entry name" value="Shikm_DH/Glu-tRNA_Rdtase"/>
</dbReference>
<dbReference type="NCBIfam" id="TIGR00507">
    <property type="entry name" value="aroE"/>
    <property type="match status" value="1"/>
</dbReference>
<dbReference type="NCBIfam" id="NF001310">
    <property type="entry name" value="PRK00258.1-2"/>
    <property type="match status" value="1"/>
</dbReference>
<dbReference type="PANTHER" id="PTHR21089:SF1">
    <property type="entry name" value="BIFUNCTIONAL 3-DEHYDROQUINATE DEHYDRATASE_SHIKIMATE DEHYDROGENASE, CHLOROPLASTIC"/>
    <property type="match status" value="1"/>
</dbReference>
<dbReference type="PANTHER" id="PTHR21089">
    <property type="entry name" value="SHIKIMATE DEHYDROGENASE"/>
    <property type="match status" value="1"/>
</dbReference>
<dbReference type="Pfam" id="PF18317">
    <property type="entry name" value="SDH_C"/>
    <property type="match status" value="1"/>
</dbReference>
<dbReference type="Pfam" id="PF01488">
    <property type="entry name" value="Shikimate_DH"/>
    <property type="match status" value="1"/>
</dbReference>
<dbReference type="Pfam" id="PF08501">
    <property type="entry name" value="Shikimate_dh_N"/>
    <property type="match status" value="1"/>
</dbReference>
<dbReference type="SUPFAM" id="SSF53223">
    <property type="entry name" value="Aminoacid dehydrogenase-like, N-terminal domain"/>
    <property type="match status" value="1"/>
</dbReference>
<dbReference type="SUPFAM" id="SSF51735">
    <property type="entry name" value="NAD(P)-binding Rossmann-fold domains"/>
    <property type="match status" value="1"/>
</dbReference>